<keyword id="KW-0145">Chemotaxis</keyword>
<keyword id="KW-0963">Cytoplasm</keyword>
<keyword id="KW-0378">Hydrolase</keyword>
<keyword id="KW-0597">Phosphoprotein</keyword>
<keyword id="KW-1185">Reference proteome</keyword>
<evidence type="ECO:0000255" key="1">
    <source>
        <dbReference type="HAMAP-Rule" id="MF_00099"/>
    </source>
</evidence>
<accession>Q21G20</accession>
<sequence length="348" mass="36970">MKPIKVLIIDDSALIRSLLREMITSDPRLEVCGAAEDPYQAREMIKQLNPHVLTLDIEMPRMNGISFLKNLMRLHPLPVVMISTLTQVGAPETLEALSLGAVDFIGKPKQHSDLGLSQYRDEIIRKLICAAGANVTAMEGVGKAKATGLDAVAQSKSLKTGFLCAIGASTGGTEAIKAVVSSLPLNSPPIVVTQHIPPAFSTSFAKRLDGASAVKVYEAQHQQPIEKGCVYIAPGDAHLKVSKTAKGYICLLDSGEMVNRHRPSVEVLFDSVCEQVGNKAMGVILTGMGADGAEALKRMRDAGSHTIAQDEATSIVWGMPGAAVKLDAAAEVLPLNKVAANIIKHALK</sequence>
<comment type="function">
    <text evidence="1">Involved in chemotaxis. Part of a chemotaxis signal transduction system that modulates chemotaxis in response to various stimuli. Catalyzes the demethylation of specific methylglutamate residues introduced into the chemoreceptors (methyl-accepting chemotaxis proteins or MCP) by CheR. Also mediates the irreversible deamidation of specific glutamine residues to glutamic acid.</text>
</comment>
<comment type="catalytic activity">
    <reaction evidence="1">
        <text>[protein]-L-glutamate 5-O-methyl ester + H2O = L-glutamyl-[protein] + methanol + H(+)</text>
        <dbReference type="Rhea" id="RHEA:23236"/>
        <dbReference type="Rhea" id="RHEA-COMP:10208"/>
        <dbReference type="Rhea" id="RHEA-COMP:10311"/>
        <dbReference type="ChEBI" id="CHEBI:15377"/>
        <dbReference type="ChEBI" id="CHEBI:15378"/>
        <dbReference type="ChEBI" id="CHEBI:17790"/>
        <dbReference type="ChEBI" id="CHEBI:29973"/>
        <dbReference type="ChEBI" id="CHEBI:82795"/>
        <dbReference type="EC" id="3.1.1.61"/>
    </reaction>
</comment>
<comment type="catalytic activity">
    <reaction evidence="1">
        <text>L-glutaminyl-[protein] + H2O = L-glutamyl-[protein] + NH4(+)</text>
        <dbReference type="Rhea" id="RHEA:16441"/>
        <dbReference type="Rhea" id="RHEA-COMP:10207"/>
        <dbReference type="Rhea" id="RHEA-COMP:10208"/>
        <dbReference type="ChEBI" id="CHEBI:15377"/>
        <dbReference type="ChEBI" id="CHEBI:28938"/>
        <dbReference type="ChEBI" id="CHEBI:29973"/>
        <dbReference type="ChEBI" id="CHEBI:30011"/>
        <dbReference type="EC" id="3.5.1.44"/>
    </reaction>
</comment>
<comment type="subcellular location">
    <subcellularLocation>
        <location evidence="1">Cytoplasm</location>
    </subcellularLocation>
</comment>
<comment type="domain">
    <text evidence="1">Contains a C-terminal catalytic domain, and an N-terminal region which modulates catalytic activity.</text>
</comment>
<comment type="PTM">
    <text evidence="1">Phosphorylated by CheA. Phosphorylation of the N-terminal regulatory domain activates the methylesterase activity.</text>
</comment>
<comment type="similarity">
    <text evidence="1">Belongs to the CheB family.</text>
</comment>
<name>CHEB2_SACD2</name>
<proteinExistence type="inferred from homology"/>
<reference key="1">
    <citation type="journal article" date="2008" name="PLoS Genet.">
        <title>Complete genome sequence of the complex carbohydrate-degrading marine bacterium, Saccharophagus degradans strain 2-40 T.</title>
        <authorList>
            <person name="Weiner R.M."/>
            <person name="Taylor L.E. II"/>
            <person name="Henrissat B."/>
            <person name="Hauser L."/>
            <person name="Land M."/>
            <person name="Coutinho P.M."/>
            <person name="Rancurel C."/>
            <person name="Saunders E.H."/>
            <person name="Longmire A.G."/>
            <person name="Zhang H."/>
            <person name="Bayer E.A."/>
            <person name="Gilbert H.J."/>
            <person name="Larimer F."/>
            <person name="Zhulin I.B."/>
            <person name="Ekborg N.A."/>
            <person name="Lamed R."/>
            <person name="Richardson P.M."/>
            <person name="Borovok I."/>
            <person name="Hutcheson S."/>
        </authorList>
    </citation>
    <scope>NUCLEOTIDE SEQUENCE [LARGE SCALE GENOMIC DNA]</scope>
    <source>
        <strain>2-40 / ATCC 43961 / DSM 17024</strain>
    </source>
</reference>
<protein>
    <recommendedName>
        <fullName evidence="1">Protein-glutamate methylesterase/protein-glutamine glutaminase 2</fullName>
        <ecNumber evidence="1">3.1.1.61</ecNumber>
        <ecNumber evidence="1">3.5.1.44</ecNumber>
    </recommendedName>
</protein>
<organism>
    <name type="scientific">Saccharophagus degradans (strain 2-40 / ATCC 43961 / DSM 17024)</name>
    <dbReference type="NCBI Taxonomy" id="203122"/>
    <lineage>
        <taxon>Bacteria</taxon>
        <taxon>Pseudomonadati</taxon>
        <taxon>Pseudomonadota</taxon>
        <taxon>Gammaproteobacteria</taxon>
        <taxon>Cellvibrionales</taxon>
        <taxon>Cellvibrionaceae</taxon>
        <taxon>Saccharophagus</taxon>
    </lineage>
</organism>
<gene>
    <name evidence="1" type="primary">cheB2</name>
    <name type="ordered locus">Sde_3102</name>
</gene>
<feature type="chain" id="PRO_0000264316" description="Protein-glutamate methylesterase/protein-glutamine glutaminase 2">
    <location>
        <begin position="1"/>
        <end position="348"/>
    </location>
</feature>
<feature type="domain" description="Response regulatory" evidence="1">
    <location>
        <begin position="5"/>
        <end position="122"/>
    </location>
</feature>
<feature type="domain" description="CheB-type methylesterase" evidence="1">
    <location>
        <begin position="157"/>
        <end position="348"/>
    </location>
</feature>
<feature type="active site" evidence="1">
    <location>
        <position position="169"/>
    </location>
</feature>
<feature type="active site" evidence="1">
    <location>
        <position position="195"/>
    </location>
</feature>
<feature type="active site" evidence="1">
    <location>
        <position position="291"/>
    </location>
</feature>
<feature type="modified residue" description="4-aspartylphosphate" evidence="1">
    <location>
        <position position="56"/>
    </location>
</feature>
<dbReference type="EC" id="3.1.1.61" evidence="1"/>
<dbReference type="EC" id="3.5.1.44" evidence="1"/>
<dbReference type="EMBL" id="CP000282">
    <property type="protein sequence ID" value="ABD82359.1"/>
    <property type="molecule type" value="Genomic_DNA"/>
</dbReference>
<dbReference type="RefSeq" id="WP_011469575.1">
    <property type="nucleotide sequence ID" value="NC_007912.1"/>
</dbReference>
<dbReference type="SMR" id="Q21G20"/>
<dbReference type="STRING" id="203122.Sde_3102"/>
<dbReference type="GeneID" id="98614735"/>
<dbReference type="KEGG" id="sde:Sde_3102"/>
<dbReference type="eggNOG" id="COG2201">
    <property type="taxonomic scope" value="Bacteria"/>
</dbReference>
<dbReference type="HOGENOM" id="CLU_000445_51_0_6"/>
<dbReference type="OrthoDB" id="9793421at2"/>
<dbReference type="Proteomes" id="UP000001947">
    <property type="component" value="Chromosome"/>
</dbReference>
<dbReference type="GO" id="GO:0005737">
    <property type="term" value="C:cytoplasm"/>
    <property type="evidence" value="ECO:0007669"/>
    <property type="project" value="UniProtKB-SubCell"/>
</dbReference>
<dbReference type="GO" id="GO:0000156">
    <property type="term" value="F:phosphorelay response regulator activity"/>
    <property type="evidence" value="ECO:0007669"/>
    <property type="project" value="InterPro"/>
</dbReference>
<dbReference type="GO" id="GO:0008984">
    <property type="term" value="F:protein-glutamate methylesterase activity"/>
    <property type="evidence" value="ECO:0007669"/>
    <property type="project" value="UniProtKB-UniRule"/>
</dbReference>
<dbReference type="GO" id="GO:0050568">
    <property type="term" value="F:protein-glutamine glutaminase activity"/>
    <property type="evidence" value="ECO:0007669"/>
    <property type="project" value="UniProtKB-UniRule"/>
</dbReference>
<dbReference type="GO" id="GO:0006935">
    <property type="term" value="P:chemotaxis"/>
    <property type="evidence" value="ECO:0007669"/>
    <property type="project" value="UniProtKB-UniRule"/>
</dbReference>
<dbReference type="CDD" id="cd16432">
    <property type="entry name" value="CheB_Rec"/>
    <property type="match status" value="1"/>
</dbReference>
<dbReference type="CDD" id="cd17541">
    <property type="entry name" value="REC_CheB-like"/>
    <property type="match status" value="1"/>
</dbReference>
<dbReference type="Gene3D" id="3.40.50.2300">
    <property type="match status" value="1"/>
</dbReference>
<dbReference type="Gene3D" id="3.40.50.180">
    <property type="entry name" value="Methylesterase CheB, C-terminal domain"/>
    <property type="match status" value="1"/>
</dbReference>
<dbReference type="HAMAP" id="MF_00099">
    <property type="entry name" value="CheB_chemtxs"/>
    <property type="match status" value="1"/>
</dbReference>
<dbReference type="InterPro" id="IPR008248">
    <property type="entry name" value="CheB-like"/>
</dbReference>
<dbReference type="InterPro" id="IPR035909">
    <property type="entry name" value="CheB_C"/>
</dbReference>
<dbReference type="InterPro" id="IPR011006">
    <property type="entry name" value="CheY-like_superfamily"/>
</dbReference>
<dbReference type="InterPro" id="IPR000673">
    <property type="entry name" value="Sig_transdc_resp-reg_Me-estase"/>
</dbReference>
<dbReference type="InterPro" id="IPR001789">
    <property type="entry name" value="Sig_transdc_resp-reg_receiver"/>
</dbReference>
<dbReference type="NCBIfam" id="NF001965">
    <property type="entry name" value="PRK00742.1"/>
    <property type="match status" value="1"/>
</dbReference>
<dbReference type="NCBIfam" id="NF009206">
    <property type="entry name" value="PRK12555.1"/>
    <property type="match status" value="1"/>
</dbReference>
<dbReference type="PANTHER" id="PTHR42872">
    <property type="entry name" value="PROTEIN-GLUTAMATE METHYLESTERASE/PROTEIN-GLUTAMINE GLUTAMINASE"/>
    <property type="match status" value="1"/>
</dbReference>
<dbReference type="PANTHER" id="PTHR42872:SF6">
    <property type="entry name" value="PROTEIN-GLUTAMATE METHYLESTERASE_PROTEIN-GLUTAMINE GLUTAMINASE"/>
    <property type="match status" value="1"/>
</dbReference>
<dbReference type="Pfam" id="PF01339">
    <property type="entry name" value="CheB_methylest"/>
    <property type="match status" value="1"/>
</dbReference>
<dbReference type="Pfam" id="PF00072">
    <property type="entry name" value="Response_reg"/>
    <property type="match status" value="1"/>
</dbReference>
<dbReference type="PIRSF" id="PIRSF000876">
    <property type="entry name" value="RR_chemtxs_CheB"/>
    <property type="match status" value="1"/>
</dbReference>
<dbReference type="SMART" id="SM00448">
    <property type="entry name" value="REC"/>
    <property type="match status" value="1"/>
</dbReference>
<dbReference type="SUPFAM" id="SSF52172">
    <property type="entry name" value="CheY-like"/>
    <property type="match status" value="1"/>
</dbReference>
<dbReference type="SUPFAM" id="SSF52738">
    <property type="entry name" value="Methylesterase CheB, C-terminal domain"/>
    <property type="match status" value="1"/>
</dbReference>
<dbReference type="PROSITE" id="PS50122">
    <property type="entry name" value="CHEB"/>
    <property type="match status" value="1"/>
</dbReference>
<dbReference type="PROSITE" id="PS50110">
    <property type="entry name" value="RESPONSE_REGULATORY"/>
    <property type="match status" value="1"/>
</dbReference>